<accession>Q5MZ82</accession>
<reference key="1">
    <citation type="journal article" date="2007" name="Photosyn. Res.">
        <title>Complete nucleotide sequence of the freshwater unicellular cyanobacterium Synechococcus elongatus PCC 6301 chromosome: gene content and organization.</title>
        <authorList>
            <person name="Sugita C."/>
            <person name="Ogata K."/>
            <person name="Shikata M."/>
            <person name="Jikuya H."/>
            <person name="Takano J."/>
            <person name="Furumichi M."/>
            <person name="Kanehisa M."/>
            <person name="Omata T."/>
            <person name="Sugiura M."/>
            <person name="Sugita M."/>
        </authorList>
    </citation>
    <scope>NUCLEOTIDE SEQUENCE [LARGE SCALE GENOMIC DNA]</scope>
    <source>
        <strain>ATCC 27144 / PCC 6301 / SAUG 1402/1</strain>
    </source>
</reference>
<evidence type="ECO:0000255" key="1">
    <source>
        <dbReference type="HAMAP-Rule" id="MF_01383"/>
    </source>
</evidence>
<dbReference type="EC" id="1.10.3.9" evidence="1"/>
<dbReference type="EMBL" id="AP008231">
    <property type="protein sequence ID" value="BAD80638.1"/>
    <property type="molecule type" value="Genomic_DNA"/>
</dbReference>
<dbReference type="RefSeq" id="WP_011244758.1">
    <property type="nucleotide sequence ID" value="NC_006576.1"/>
</dbReference>
<dbReference type="SMR" id="Q5MZ82"/>
<dbReference type="KEGG" id="syc:syc2448_d"/>
<dbReference type="eggNOG" id="ENOG502Z8JK">
    <property type="taxonomic scope" value="Bacteria"/>
</dbReference>
<dbReference type="Proteomes" id="UP000001175">
    <property type="component" value="Chromosome"/>
</dbReference>
<dbReference type="GO" id="GO:0009523">
    <property type="term" value="C:photosystem II"/>
    <property type="evidence" value="ECO:0007669"/>
    <property type="project" value="UniProtKB-KW"/>
</dbReference>
<dbReference type="GO" id="GO:0031676">
    <property type="term" value="C:plasma membrane-derived thylakoid membrane"/>
    <property type="evidence" value="ECO:0007669"/>
    <property type="project" value="UniProtKB-SubCell"/>
</dbReference>
<dbReference type="GO" id="GO:0016168">
    <property type="term" value="F:chlorophyll binding"/>
    <property type="evidence" value="ECO:0007669"/>
    <property type="project" value="UniProtKB-UniRule"/>
</dbReference>
<dbReference type="GO" id="GO:0045156">
    <property type="term" value="F:electron transporter, transferring electrons within the cyclic electron transport pathway of photosynthesis activity"/>
    <property type="evidence" value="ECO:0007669"/>
    <property type="project" value="InterPro"/>
</dbReference>
<dbReference type="GO" id="GO:0005506">
    <property type="term" value="F:iron ion binding"/>
    <property type="evidence" value="ECO:0007669"/>
    <property type="project" value="UniProtKB-UniRule"/>
</dbReference>
<dbReference type="GO" id="GO:0010242">
    <property type="term" value="F:oxygen evolving activity"/>
    <property type="evidence" value="ECO:0007669"/>
    <property type="project" value="UniProtKB-EC"/>
</dbReference>
<dbReference type="GO" id="GO:0009772">
    <property type="term" value="P:photosynthetic electron transport in photosystem II"/>
    <property type="evidence" value="ECO:0007669"/>
    <property type="project" value="InterPro"/>
</dbReference>
<dbReference type="FunFam" id="1.20.85.10:FF:000001">
    <property type="entry name" value="photosystem II D2 protein-like"/>
    <property type="match status" value="1"/>
</dbReference>
<dbReference type="Gene3D" id="1.20.85.10">
    <property type="entry name" value="Photosystem II protein D1-like"/>
    <property type="match status" value="1"/>
</dbReference>
<dbReference type="HAMAP" id="MF_01383">
    <property type="entry name" value="PSII_PsbD_D2"/>
    <property type="match status" value="1"/>
</dbReference>
<dbReference type="InterPro" id="IPR055266">
    <property type="entry name" value="D1/D2"/>
</dbReference>
<dbReference type="InterPro" id="IPR036854">
    <property type="entry name" value="Photo_II_D1/D2_sf"/>
</dbReference>
<dbReference type="InterPro" id="IPR000484">
    <property type="entry name" value="Photo_RC_L/M"/>
</dbReference>
<dbReference type="InterPro" id="IPR055265">
    <property type="entry name" value="Photo_RC_L/M_CS"/>
</dbReference>
<dbReference type="InterPro" id="IPR005868">
    <property type="entry name" value="PSII_PsbD/D2"/>
</dbReference>
<dbReference type="NCBIfam" id="TIGR01152">
    <property type="entry name" value="psbD"/>
    <property type="match status" value="1"/>
</dbReference>
<dbReference type="PANTHER" id="PTHR33149:SF12">
    <property type="entry name" value="PHOTOSYSTEM II D2 PROTEIN"/>
    <property type="match status" value="1"/>
</dbReference>
<dbReference type="PANTHER" id="PTHR33149">
    <property type="entry name" value="PHOTOSYSTEM II PROTEIN D1"/>
    <property type="match status" value="1"/>
</dbReference>
<dbReference type="Pfam" id="PF00124">
    <property type="entry name" value="Photo_RC"/>
    <property type="match status" value="1"/>
</dbReference>
<dbReference type="PRINTS" id="PR00256">
    <property type="entry name" value="REACTNCENTRE"/>
</dbReference>
<dbReference type="SUPFAM" id="SSF81483">
    <property type="entry name" value="Bacterial photosystem II reaction centre, L and M subunits"/>
    <property type="match status" value="1"/>
</dbReference>
<dbReference type="PROSITE" id="PS00244">
    <property type="entry name" value="REACTION_CENTER"/>
    <property type="match status" value="1"/>
</dbReference>
<sequence length="352" mass="39462">MTIAVGRAPAERGWFDVLDDWLKRDRYVFVGWSGLLLFPCAYLALGGWLTGTSFVTSWYTHGIASSYLEGGNFLTVAVSTPADAFGHSLMLLWGPEAQGNFVRWCQLGGLWNFVALHGAFGLIGFMLRQFEIARLVGVRPYNAIAFSGPIAVFVSVFLMYPLGQSSWFFAPSFGVAAIFRFLLFLQGFHNWTLNPFHMMGVAGILGGALLCAIHGATVENTLFEDSEQSNTFRAFEPTQAEETYSMVTANRFWSQIFGIAFSNKRWLHFFMLFVPVTGLWMSSIGIVGLALNLRAYDFVSQELRAAEDPEFETFYTKNILLNEGIRAWMAPQDQPHEKFVFPEEVLPRGNAL</sequence>
<name>PSBD2_SYNP6</name>
<feature type="chain" id="PRO_0000359605" description="Photosystem II D2 protein 2">
    <location>
        <begin position="1"/>
        <end position="352"/>
    </location>
</feature>
<feature type="transmembrane region" description="Helical" evidence="1">
    <location>
        <begin position="40"/>
        <end position="60"/>
    </location>
</feature>
<feature type="transmembrane region" description="Helical" evidence="1">
    <location>
        <begin position="124"/>
        <end position="140"/>
    </location>
</feature>
<feature type="transmembrane region" description="Helical" evidence="1">
    <location>
        <begin position="152"/>
        <end position="165"/>
    </location>
</feature>
<feature type="transmembrane region" description="Helical" evidence="1">
    <location>
        <begin position="207"/>
        <end position="227"/>
    </location>
</feature>
<feature type="transmembrane region" description="Helical" evidence="1">
    <location>
        <begin position="278"/>
        <end position="294"/>
    </location>
</feature>
<feature type="binding site" description="axial binding residue" evidence="1">
    <location>
        <position position="117"/>
    </location>
    <ligand>
        <name>chlorophyll a</name>
        <dbReference type="ChEBI" id="CHEBI:58416"/>
        <label>ChlzD2</label>
    </ligand>
    <ligandPart>
        <name>Mg</name>
        <dbReference type="ChEBI" id="CHEBI:25107"/>
    </ligandPart>
</feature>
<feature type="binding site" evidence="1">
    <location>
        <position position="129"/>
    </location>
    <ligand>
        <name>pheophytin a</name>
        <dbReference type="ChEBI" id="CHEBI:136840"/>
        <label>D2</label>
    </ligand>
</feature>
<feature type="binding site" evidence="1">
    <location>
        <position position="142"/>
    </location>
    <ligand>
        <name>pheophytin a</name>
        <dbReference type="ChEBI" id="CHEBI:136840"/>
        <label>D2</label>
    </ligand>
</feature>
<feature type="binding site" description="axial binding residue" evidence="1">
    <location>
        <position position="197"/>
    </location>
    <ligand>
        <name>chlorophyll a</name>
        <dbReference type="ChEBI" id="CHEBI:58416"/>
        <label>PD2</label>
    </ligand>
    <ligandPart>
        <name>Mg</name>
        <dbReference type="ChEBI" id="CHEBI:25107"/>
    </ligandPart>
</feature>
<feature type="binding site" evidence="1">
    <location>
        <position position="214"/>
    </location>
    <ligand>
        <name>a plastoquinone</name>
        <dbReference type="ChEBI" id="CHEBI:17757"/>
        <label>Q(A)</label>
    </ligand>
</feature>
<feature type="binding site" evidence="1">
    <location>
        <position position="214"/>
    </location>
    <ligand>
        <name>Fe cation</name>
        <dbReference type="ChEBI" id="CHEBI:24875"/>
        <note>ligand shared with heterodimeric partner</note>
    </ligand>
</feature>
<feature type="binding site" evidence="1">
    <location>
        <position position="261"/>
    </location>
    <ligand>
        <name>a plastoquinone</name>
        <dbReference type="ChEBI" id="CHEBI:17757"/>
        <label>Q(A)</label>
    </ligand>
</feature>
<feature type="binding site" evidence="1">
    <location>
        <position position="268"/>
    </location>
    <ligand>
        <name>Fe cation</name>
        <dbReference type="ChEBI" id="CHEBI:24875"/>
        <note>ligand shared with heterodimeric partner</note>
    </ligand>
</feature>
<protein>
    <recommendedName>
        <fullName evidence="1">Photosystem II D2 protein 2</fullName>
        <shortName evidence="1">PSII D2 protein 2</shortName>
        <ecNumber evidence="1">1.10.3.9</ecNumber>
    </recommendedName>
    <alternativeName>
        <fullName evidence="1">Photosystem Q(A) protein 2</fullName>
    </alternativeName>
</protein>
<comment type="function">
    <text evidence="1">Photosystem II (PSII) is a light-driven water:plastoquinone oxidoreductase that uses light energy to abstract electrons from H(2)O, generating O(2) and a proton gradient subsequently used for ATP formation. It consists of a core antenna complex that captures photons, and an electron transfer chain that converts photonic excitation into a charge separation. The D1/D2 (PsbA/PsbD) reaction center heterodimer binds P680, the primary electron donor of PSII as well as several subsequent electron acceptors. D2 is needed for assembly of a stable PSII complex.</text>
</comment>
<comment type="catalytic activity">
    <reaction evidence="1">
        <text>2 a plastoquinone + 4 hnu + 2 H2O = 2 a plastoquinol + O2</text>
        <dbReference type="Rhea" id="RHEA:36359"/>
        <dbReference type="Rhea" id="RHEA-COMP:9561"/>
        <dbReference type="Rhea" id="RHEA-COMP:9562"/>
        <dbReference type="ChEBI" id="CHEBI:15377"/>
        <dbReference type="ChEBI" id="CHEBI:15379"/>
        <dbReference type="ChEBI" id="CHEBI:17757"/>
        <dbReference type="ChEBI" id="CHEBI:30212"/>
        <dbReference type="ChEBI" id="CHEBI:62192"/>
        <dbReference type="EC" id="1.10.3.9"/>
    </reaction>
</comment>
<comment type="cofactor">
    <text evidence="1">The D1/D2 heterodimer binds P680, chlorophylls that are the primary electron donor of PSII, and subsequent electron acceptors. It shares a non-heme iron and each subunit binds pheophytin, quinone, additional chlorophylls, carotenoids and lipids. There is also a Cl(-1) ion associated with D1 and D2, which is required for oxygen evolution. The PSII complex binds additional chlorophylls, carotenoids and specific lipids.</text>
</comment>
<comment type="subunit">
    <text evidence="1">PSII is composed of 1 copy each of membrane proteins PsbA, PsbB, PsbC, PsbD, PsbE, PsbF, PsbH, PsbI, PsbJ, PsbK, PsbL, PsbM, PsbT, PsbX, PsbY, PsbZ, Psb30/Ycf12, peripheral proteins PsbO, CyanoQ (PsbQ), PsbU, PsbV and a large number of cofactors. It forms dimeric complexes.</text>
</comment>
<comment type="subcellular location">
    <subcellularLocation>
        <location evidence="1">Cellular thylakoid membrane</location>
        <topology evidence="1">Multi-pass membrane protein</topology>
    </subcellularLocation>
</comment>
<comment type="miscellaneous">
    <text evidence="1">2 of the reaction center chlorophylls (ChlD1 and ChlD2) are entirely coordinated by water.</text>
</comment>
<comment type="similarity">
    <text evidence="1">Belongs to the reaction center PufL/M/PsbA/D family.</text>
</comment>
<gene>
    <name evidence="1" type="primary">psbD2</name>
    <name type="ordered locus">syc2448_d</name>
</gene>
<organism>
    <name type="scientific">Synechococcus sp. (strain ATCC 27144 / PCC 6301 / SAUG 1402/1)</name>
    <name type="common">Anacystis nidulans</name>
    <dbReference type="NCBI Taxonomy" id="269084"/>
    <lineage>
        <taxon>Bacteria</taxon>
        <taxon>Bacillati</taxon>
        <taxon>Cyanobacteriota</taxon>
        <taxon>Cyanophyceae</taxon>
        <taxon>Synechococcales</taxon>
        <taxon>Synechococcaceae</taxon>
        <taxon>Synechococcus</taxon>
    </lineage>
</organism>
<keyword id="KW-0148">Chlorophyll</keyword>
<keyword id="KW-0157">Chromophore</keyword>
<keyword id="KW-0249">Electron transport</keyword>
<keyword id="KW-0408">Iron</keyword>
<keyword id="KW-0460">Magnesium</keyword>
<keyword id="KW-0472">Membrane</keyword>
<keyword id="KW-0479">Metal-binding</keyword>
<keyword id="KW-0560">Oxidoreductase</keyword>
<keyword id="KW-0602">Photosynthesis</keyword>
<keyword id="KW-0604">Photosystem II</keyword>
<keyword id="KW-0793">Thylakoid</keyword>
<keyword id="KW-0812">Transmembrane</keyword>
<keyword id="KW-1133">Transmembrane helix</keyword>
<keyword id="KW-0813">Transport</keyword>
<proteinExistence type="inferred from homology"/>